<organism>
    <name type="scientific">Arabidopsis thaliana</name>
    <name type="common">Mouse-ear cress</name>
    <dbReference type="NCBI Taxonomy" id="3702"/>
    <lineage>
        <taxon>Eukaryota</taxon>
        <taxon>Viridiplantae</taxon>
        <taxon>Streptophyta</taxon>
        <taxon>Embryophyta</taxon>
        <taxon>Tracheophyta</taxon>
        <taxon>Spermatophyta</taxon>
        <taxon>Magnoliopsida</taxon>
        <taxon>eudicotyledons</taxon>
        <taxon>Gunneridae</taxon>
        <taxon>Pentapetalae</taxon>
        <taxon>rosids</taxon>
        <taxon>malvids</taxon>
        <taxon>Brassicales</taxon>
        <taxon>Brassicaceae</taxon>
        <taxon>Camelineae</taxon>
        <taxon>Arabidopsis</taxon>
    </lineage>
</organism>
<keyword id="KW-0067">ATP-binding</keyword>
<keyword id="KW-0325">Glycoprotein</keyword>
<keyword id="KW-0472">Membrane</keyword>
<keyword id="KW-0547">Nucleotide-binding</keyword>
<keyword id="KW-1185">Reference proteome</keyword>
<keyword id="KW-0677">Repeat</keyword>
<keyword id="KW-0812">Transmembrane</keyword>
<keyword id="KW-1133">Transmembrane helix</keyword>
<keyword id="KW-0813">Transport</keyword>
<dbReference type="EMBL" id="AC004218">
    <property type="protein sequence ID" value="AAC27839.1"/>
    <property type="molecule type" value="Genomic_DNA"/>
</dbReference>
<dbReference type="EMBL" id="CP002685">
    <property type="protein sequence ID" value="AEC09685.1"/>
    <property type="molecule type" value="Genomic_DNA"/>
</dbReference>
<dbReference type="EMBL" id="AY094398">
    <property type="protein sequence ID" value="AAM19777.1"/>
    <property type="molecule type" value="mRNA"/>
</dbReference>
<dbReference type="PIR" id="T00558">
    <property type="entry name" value="T00558"/>
</dbReference>
<dbReference type="RefSeq" id="NP_181480.1">
    <property type="nucleotide sequence ID" value="NM_129506.2"/>
</dbReference>
<dbReference type="SMR" id="Q8LPT1"/>
<dbReference type="BioGRID" id="3871">
    <property type="interactions" value="3"/>
</dbReference>
<dbReference type="FunCoup" id="Q8LPT1">
    <property type="interactions" value="453"/>
</dbReference>
<dbReference type="IntAct" id="Q8LPT1">
    <property type="interactions" value="2"/>
</dbReference>
<dbReference type="STRING" id="3702.Q8LPT1"/>
<dbReference type="GlyCosmos" id="Q8LPT1">
    <property type="glycosylation" value="8 sites, No reported glycans"/>
</dbReference>
<dbReference type="GlyGen" id="Q8LPT1">
    <property type="glycosylation" value="8 sites"/>
</dbReference>
<dbReference type="iPTMnet" id="Q8LPT1"/>
<dbReference type="PaxDb" id="3702-AT2G39480.1"/>
<dbReference type="ProteomicsDB" id="244627"/>
<dbReference type="EnsemblPlants" id="AT2G39480.1">
    <property type="protein sequence ID" value="AT2G39480.1"/>
    <property type="gene ID" value="AT2G39480"/>
</dbReference>
<dbReference type="GeneID" id="818533"/>
<dbReference type="Gramene" id="AT2G39480.1">
    <property type="protein sequence ID" value="AT2G39480.1"/>
    <property type="gene ID" value="AT2G39480"/>
</dbReference>
<dbReference type="KEGG" id="ath:AT2G39480"/>
<dbReference type="Araport" id="AT2G39480"/>
<dbReference type="TAIR" id="AT2G39480">
    <property type="gene designation" value="ABCB6"/>
</dbReference>
<dbReference type="eggNOG" id="KOG0055">
    <property type="taxonomic scope" value="Eukaryota"/>
</dbReference>
<dbReference type="HOGENOM" id="CLU_000604_17_2_1"/>
<dbReference type="InParanoid" id="Q8LPT1"/>
<dbReference type="PhylomeDB" id="Q8LPT1"/>
<dbReference type="BioCyc" id="ARA:AT2G39480-MONOMER"/>
<dbReference type="PRO" id="PR:Q8LPT1"/>
<dbReference type="Proteomes" id="UP000006548">
    <property type="component" value="Chromosome 2"/>
</dbReference>
<dbReference type="ExpressionAtlas" id="Q8LPT1">
    <property type="expression patterns" value="baseline and differential"/>
</dbReference>
<dbReference type="GO" id="GO:0005794">
    <property type="term" value="C:Golgi apparatus"/>
    <property type="evidence" value="ECO:0007005"/>
    <property type="project" value="TAIR"/>
</dbReference>
<dbReference type="GO" id="GO:0005886">
    <property type="term" value="C:plasma membrane"/>
    <property type="evidence" value="ECO:0007005"/>
    <property type="project" value="TAIR"/>
</dbReference>
<dbReference type="GO" id="GO:0009506">
    <property type="term" value="C:plasmodesma"/>
    <property type="evidence" value="ECO:0007005"/>
    <property type="project" value="TAIR"/>
</dbReference>
<dbReference type="GO" id="GO:0140359">
    <property type="term" value="F:ABC-type transporter activity"/>
    <property type="evidence" value="ECO:0007669"/>
    <property type="project" value="InterPro"/>
</dbReference>
<dbReference type="GO" id="GO:0005524">
    <property type="term" value="F:ATP binding"/>
    <property type="evidence" value="ECO:0007669"/>
    <property type="project" value="UniProtKB-KW"/>
</dbReference>
<dbReference type="GO" id="GO:0016887">
    <property type="term" value="F:ATP hydrolysis activity"/>
    <property type="evidence" value="ECO:0007669"/>
    <property type="project" value="InterPro"/>
</dbReference>
<dbReference type="CDD" id="cd18577">
    <property type="entry name" value="ABC_6TM_Pgp_ABCB1_D1_like"/>
    <property type="match status" value="1"/>
</dbReference>
<dbReference type="CDD" id="cd18578">
    <property type="entry name" value="ABC_6TM_Pgp_ABCB1_D2_like"/>
    <property type="match status" value="1"/>
</dbReference>
<dbReference type="FunFam" id="1.20.1560.10:FF:000028">
    <property type="entry name" value="ABC transporter B family member 20"/>
    <property type="match status" value="1"/>
</dbReference>
<dbReference type="FunFam" id="3.40.50.300:FF:000240">
    <property type="entry name" value="ABC transporter B family member 20"/>
    <property type="match status" value="1"/>
</dbReference>
<dbReference type="FunFam" id="3.40.50.300:FF:001683">
    <property type="entry name" value="ABC transporter B family member 20"/>
    <property type="match status" value="1"/>
</dbReference>
<dbReference type="FunFam" id="1.20.1560.10:FF:000021">
    <property type="entry name" value="ABC transporter B family member 6"/>
    <property type="match status" value="1"/>
</dbReference>
<dbReference type="FunFam" id="1.20.1560.10:FF:000049">
    <property type="entry name" value="ABC transporter B family member 6"/>
    <property type="match status" value="1"/>
</dbReference>
<dbReference type="Gene3D" id="1.20.1560.10">
    <property type="entry name" value="ABC transporter type 1, transmembrane domain"/>
    <property type="match status" value="3"/>
</dbReference>
<dbReference type="Gene3D" id="3.40.50.300">
    <property type="entry name" value="P-loop containing nucleotide triphosphate hydrolases"/>
    <property type="match status" value="2"/>
</dbReference>
<dbReference type="InterPro" id="IPR003593">
    <property type="entry name" value="AAA+_ATPase"/>
</dbReference>
<dbReference type="InterPro" id="IPR011527">
    <property type="entry name" value="ABC1_TM_dom"/>
</dbReference>
<dbReference type="InterPro" id="IPR036640">
    <property type="entry name" value="ABC1_TM_sf"/>
</dbReference>
<dbReference type="InterPro" id="IPR003439">
    <property type="entry name" value="ABC_transporter-like_ATP-bd"/>
</dbReference>
<dbReference type="InterPro" id="IPR027417">
    <property type="entry name" value="P-loop_NTPase"/>
</dbReference>
<dbReference type="InterPro" id="IPR039421">
    <property type="entry name" value="Type_1_exporter"/>
</dbReference>
<dbReference type="PANTHER" id="PTHR24222">
    <property type="entry name" value="ABC TRANSPORTER B FAMILY"/>
    <property type="match status" value="1"/>
</dbReference>
<dbReference type="PANTHER" id="PTHR24222:SF52">
    <property type="entry name" value="ABC TRANSPORTER B FAMILY MEMBER 20-RELATED"/>
    <property type="match status" value="1"/>
</dbReference>
<dbReference type="Pfam" id="PF00664">
    <property type="entry name" value="ABC_membrane"/>
    <property type="match status" value="2"/>
</dbReference>
<dbReference type="Pfam" id="PF00005">
    <property type="entry name" value="ABC_tran"/>
    <property type="match status" value="2"/>
</dbReference>
<dbReference type="SMART" id="SM00382">
    <property type="entry name" value="AAA"/>
    <property type="match status" value="2"/>
</dbReference>
<dbReference type="SUPFAM" id="SSF90123">
    <property type="entry name" value="ABC transporter transmembrane region"/>
    <property type="match status" value="2"/>
</dbReference>
<dbReference type="SUPFAM" id="SSF52540">
    <property type="entry name" value="P-loop containing nucleoside triphosphate hydrolases"/>
    <property type="match status" value="2"/>
</dbReference>
<dbReference type="PROSITE" id="PS50929">
    <property type="entry name" value="ABC_TM1F"/>
    <property type="match status" value="2"/>
</dbReference>
<dbReference type="PROSITE" id="PS50893">
    <property type="entry name" value="ABC_TRANSPORTER_2"/>
    <property type="match status" value="2"/>
</dbReference>
<protein>
    <recommendedName>
        <fullName evidence="7">ABC transporter B family member 6</fullName>
        <shortName evidence="7">ABC transporter ABCB.6</shortName>
        <shortName evidence="7">AtABCB6</shortName>
    </recommendedName>
    <alternativeName>
        <fullName evidence="6">Multidrug resistance protein 6</fullName>
        <shortName evidence="6">AtMDR6</shortName>
    </alternativeName>
    <alternativeName>
        <fullName>P-glycoprotein 6</fullName>
    </alternativeName>
    <alternativeName>
        <fullName evidence="9">Probable auxin exporter ABCB6</fullName>
    </alternativeName>
</protein>
<proteinExistence type="evidence at protein level"/>
<feature type="chain" id="PRO_0000227917" description="ABC transporter B family member 6">
    <location>
        <begin position="1"/>
        <end position="1407"/>
    </location>
</feature>
<feature type="transmembrane region" description="Helical" evidence="2">
    <location>
        <begin position="84"/>
        <end position="104"/>
    </location>
</feature>
<feature type="transmembrane region" description="Helical" evidence="2">
    <location>
        <begin position="139"/>
        <end position="159"/>
    </location>
</feature>
<feature type="transmembrane region" description="Helical" evidence="2">
    <location>
        <begin position="212"/>
        <end position="231"/>
    </location>
</feature>
<feature type="transmembrane region" description="Helical" evidence="2">
    <location>
        <begin position="236"/>
        <end position="258"/>
    </location>
</feature>
<feature type="transmembrane region" description="Helical" evidence="2">
    <location>
        <begin position="310"/>
        <end position="330"/>
    </location>
</feature>
<feature type="transmembrane region" description="Helical" evidence="2">
    <location>
        <begin position="351"/>
        <end position="371"/>
    </location>
</feature>
<feature type="transmembrane region" description="Helical" evidence="2">
    <location>
        <begin position="840"/>
        <end position="860"/>
    </location>
</feature>
<feature type="transmembrane region" description="Helical" evidence="2">
    <location>
        <begin position="880"/>
        <end position="900"/>
    </location>
</feature>
<feature type="transmembrane region" description="Helical" evidence="2">
    <location>
        <begin position="958"/>
        <end position="978"/>
    </location>
</feature>
<feature type="transmembrane region" description="Helical" evidence="2">
    <location>
        <begin position="982"/>
        <end position="1002"/>
    </location>
</feature>
<feature type="transmembrane region" description="Helical" evidence="2">
    <location>
        <begin position="1061"/>
        <end position="1081"/>
    </location>
</feature>
<feature type="transmembrane region" description="Helical" evidence="2">
    <location>
        <begin position="1102"/>
        <end position="1122"/>
    </location>
</feature>
<feature type="domain" description="ABC transmembrane type-1 1" evidence="2">
    <location>
        <begin position="86"/>
        <end position="379"/>
    </location>
</feature>
<feature type="domain" description="ABC transporter 1" evidence="1">
    <location>
        <begin position="412"/>
        <end position="647"/>
    </location>
</feature>
<feature type="domain" description="ABC transmembrane type-1 2" evidence="2">
    <location>
        <begin position="835"/>
        <end position="1123"/>
    </location>
</feature>
<feature type="domain" description="ABC transporter 2" evidence="1">
    <location>
        <begin position="1158"/>
        <end position="1395"/>
    </location>
</feature>
<feature type="region of interest" description="Disordered" evidence="4">
    <location>
        <begin position="18"/>
        <end position="65"/>
    </location>
</feature>
<feature type="region of interest" description="Disordered" evidence="4">
    <location>
        <begin position="670"/>
        <end position="696"/>
    </location>
</feature>
<feature type="region of interest" description="Disordered" evidence="4">
    <location>
        <begin position="709"/>
        <end position="815"/>
    </location>
</feature>
<feature type="compositionally biased region" description="Acidic residues" evidence="4">
    <location>
        <begin position="50"/>
        <end position="63"/>
    </location>
</feature>
<feature type="compositionally biased region" description="Basic and acidic residues" evidence="4">
    <location>
        <begin position="733"/>
        <end position="755"/>
    </location>
</feature>
<feature type="compositionally biased region" description="Polar residues" evidence="4">
    <location>
        <begin position="761"/>
        <end position="770"/>
    </location>
</feature>
<feature type="binding site" evidence="1">
    <location>
        <begin position="447"/>
        <end position="454"/>
    </location>
    <ligand>
        <name>ATP</name>
        <dbReference type="ChEBI" id="CHEBI:30616"/>
        <label>1</label>
    </ligand>
</feature>
<feature type="binding site" evidence="1">
    <location>
        <begin position="1193"/>
        <end position="1200"/>
    </location>
    <ligand>
        <name>ATP</name>
        <dbReference type="ChEBI" id="CHEBI:30616"/>
        <label>2</label>
    </ligand>
</feature>
<feature type="glycosylation site" description="N-linked (GlcNAc...) asparagine" evidence="3">
    <location>
        <position position="291"/>
    </location>
</feature>
<feature type="glycosylation site" description="N-linked (GlcNAc...) asparagine" evidence="3">
    <location>
        <position position="449"/>
    </location>
</feature>
<feature type="glycosylation site" description="N-linked (GlcNAc...) asparagine" evidence="3">
    <location>
        <position position="663"/>
    </location>
</feature>
<feature type="glycosylation site" description="N-linked (GlcNAc...) asparagine" evidence="3">
    <location>
        <position position="727"/>
    </location>
</feature>
<feature type="glycosylation site" description="N-linked (GlcNAc...) asparagine" evidence="3">
    <location>
        <position position="767"/>
    </location>
</feature>
<feature type="glycosylation site" description="N-linked (GlcNAc...) asparagine" evidence="3">
    <location>
        <position position="1178"/>
    </location>
</feature>
<feature type="glycosylation site" description="N-linked (GlcNAc...) asparagine" evidence="3">
    <location>
        <position position="1260"/>
    </location>
</feature>
<feature type="glycosylation site" description="N-linked (GlcNAc...) asparagine" evidence="3">
    <location>
        <position position="1346"/>
    </location>
</feature>
<feature type="sequence conflict" description="In Ref. 3; AAM19777." evidence="8" ref="3">
    <original>E</original>
    <variation>G</variation>
    <location>
        <position position="58"/>
    </location>
</feature>
<comment type="function">
    <text evidence="5">Probable auxin efflux transporter that contributes, together with ABCB20 and in a FKBP42/TWD1-dependent manner, to the regulation of leaf position and morphology, internode distribution, roots development, and inflorescence organization, probably by modulating auxin repartition.</text>
</comment>
<comment type="catalytic activity">
    <reaction evidence="9">
        <text>(indol-3-yl)acetate(in) + ATP + H2O = (indol-3-yl)acetate(out) + ADP + phosphate + H(+)</text>
        <dbReference type="Rhea" id="RHEA:84235"/>
        <dbReference type="ChEBI" id="CHEBI:15377"/>
        <dbReference type="ChEBI" id="CHEBI:15378"/>
        <dbReference type="ChEBI" id="CHEBI:30616"/>
        <dbReference type="ChEBI" id="CHEBI:30854"/>
        <dbReference type="ChEBI" id="CHEBI:43474"/>
        <dbReference type="ChEBI" id="CHEBI:456216"/>
    </reaction>
    <physiologicalReaction direction="left-to-right" evidence="9">
        <dbReference type="Rhea" id="RHEA:84236"/>
    </physiologicalReaction>
</comment>
<comment type="subcellular location">
    <subcellularLocation>
        <location evidence="2">Membrane</location>
        <topology evidence="2">Multi-pass membrane protein</topology>
    </subcellularLocation>
</comment>
<comment type="tissue specificity">
    <text evidence="5">Expressed in aerial tissues.</text>
</comment>
<comment type="disruption phenotype">
    <text evidence="5">The abcb6 abcb20 double mutant has compact rosettes that tend to twist laterally and bow, with increased leaf down curling and wrinkling, twisted inflorescence stems, twisted siliques, and lateral organ separation defects, and reduced internode lengths, as well as fewer secondary inflorescences (PubMed:35528937). In abcb6 abcb20 double mutant, roots are short and twisted (PubMed:35528937). All torsion phenotypes are associated with reduced auxin levels and reversed by auxin efflux inhibition with 1-naphthylphthalamic acid (NPA) (PubMed:35528937).</text>
</comment>
<comment type="similarity">
    <text evidence="8">Belongs to the ABC transporter superfamily. ABCB family. Multidrug resistance exporter (TC 3.A.1.201) subfamily.</text>
</comment>
<name>AB6B_ARATH</name>
<sequence length="1407" mass="155876">MMISRGLFGWSPPHIQPLTPVSEVSEPPESPSPYLDPGAEHGGTGTAAQADDEEEMEEPEEMEPPPAAVPFSQLFACADRFDWVLMVFGSVAAAAHGTALIVYLHYFAKIVQVLAFPTDSDHLISDDQFNRLLELSLTIVYIAGGVFISGWIEVSCWILTGERQTAVIRSKYVQVLLNQDMSFFDTYGNNGDIVSQVLSDVLLIQSALSEKVGNYIHNMATFISGLIIGFVNCWEIALITLATGPFIVAAGGISNIFLHRLAENIQDAYAEAASIAEQAVSYVRTLYAFTNETLAKYSYATSLQATLRYGILISLVQGLGLGFTYGLAICSCAMQLWIGRFFVIHHRANGGEIITALFAVILSGLGLNQAATNFYSFDQGRIAAYRLFEMISRSSSGTNQEGIILSAVQGNIEFRNVYFSYLSRPEIPILSGFYLTVPAKKAVALVGRNGSGKSSIIPLMERFYDPTLGEVLLDGENIKNLKLEWLRSQIGLVTQEPALLSLSIRENIAYGRDATLDQIEEAAKKAHAHTFISSLEKGYETQVGKTGLTLTEEQKIKLSIARAVLLDPTILLLDEVTGGLDFEAERVVQEALDLLMLGRSTIIIARRLSLIRNADYIAVMEEGQLLEMGTHDELINLGNLYAELLKCEEATKLPRRMPVRNYNDSAAFQAERDSSAGRGFQEPSSPKMAKSPSLQRGHNVFRSQELCFNSEESPNDHSPAPEKLGENGSSLDVGEKEPTIKRQDSFEMRLPELPKIDIQCPQRQKSNGSDPESPISPLLISDPQNERSHSQTFSRPLGHSDDTSASVKVAKDGQHKEPPSFWRLAQLSFPEWLYAVLGSIGAAIFGSFNPLLAYVIALVVTTYYTSKGSHLREEVDKWCLIIACMGIVTVVANFLQHFYFGIMGEKMTERVRRMMFSAMLRNEVGWYDEEENSPDTLSMRLANDATFVRAAFSNRLSIFIQDSFAVIVAILIGLLLGWRLALVALATLPVLTLSAIAQKLWLAGFSKGIQEMHRKASLVLEDAVRNIYTVVAFCAGNKVMELYRLQLQRILRQSFFHGMAIGFAFGFSQFLLFACNALLLWYTALSVDRRYMKLSTALTEYMVFSFATFALVEPFGLAPYILKRRRSLASVFEIIDRVPTIEPDDTSALSPPNVYGSIELKNIDFCYPTRPEVLVLSNFSLKVNGGQTVAVVGVSGSGKSTIISLIERYYDPVAGQVLLDGRDLKSYNLRWLRSHMGLIQQEPIIFSTTIRENIIYARHNASEAEMKEAARIANAHHFISSLPHGYDTHIGMRGVELTQGQKQRIAIARVVLKNAPILLIDEASSSIESESSRVVQEALDTLIMGNKTTILIAHRVAMMRHVDNIVVLNGGKIVEEGTHDCLAGKNGLYVRLMQPHFGKNLRRHQLI</sequence>
<evidence type="ECO:0000255" key="1">
    <source>
        <dbReference type="PROSITE-ProRule" id="PRU00434"/>
    </source>
</evidence>
<evidence type="ECO:0000255" key="2">
    <source>
        <dbReference type="PROSITE-ProRule" id="PRU00441"/>
    </source>
</evidence>
<evidence type="ECO:0000255" key="3">
    <source>
        <dbReference type="PROSITE-ProRule" id="PRU00498"/>
    </source>
</evidence>
<evidence type="ECO:0000256" key="4">
    <source>
        <dbReference type="SAM" id="MobiDB-lite"/>
    </source>
</evidence>
<evidence type="ECO:0000269" key="5">
    <source>
    </source>
</evidence>
<evidence type="ECO:0000303" key="6">
    <source>
    </source>
</evidence>
<evidence type="ECO:0000303" key="7">
    <source>
    </source>
</evidence>
<evidence type="ECO:0000305" key="8"/>
<evidence type="ECO:0000305" key="9">
    <source>
    </source>
</evidence>
<evidence type="ECO:0000312" key="10">
    <source>
        <dbReference type="Araport" id="AT2G39480"/>
    </source>
</evidence>
<evidence type="ECO:0000312" key="11">
    <source>
        <dbReference type="EMBL" id="AAC27839.1"/>
    </source>
</evidence>
<reference key="1">
    <citation type="journal article" date="1999" name="Nature">
        <title>Sequence and analysis of chromosome 2 of the plant Arabidopsis thaliana.</title>
        <authorList>
            <person name="Lin X."/>
            <person name="Kaul S."/>
            <person name="Rounsley S.D."/>
            <person name="Shea T.P."/>
            <person name="Benito M.-I."/>
            <person name="Town C.D."/>
            <person name="Fujii C.Y."/>
            <person name="Mason T.M."/>
            <person name="Bowman C.L."/>
            <person name="Barnstead M.E."/>
            <person name="Feldblyum T.V."/>
            <person name="Buell C.R."/>
            <person name="Ketchum K.A."/>
            <person name="Lee J.J."/>
            <person name="Ronning C.M."/>
            <person name="Koo H.L."/>
            <person name="Moffat K.S."/>
            <person name="Cronin L.A."/>
            <person name="Shen M."/>
            <person name="Pai G."/>
            <person name="Van Aken S."/>
            <person name="Umayam L."/>
            <person name="Tallon L.J."/>
            <person name="Gill J.E."/>
            <person name="Adams M.D."/>
            <person name="Carrera A.J."/>
            <person name="Creasy T.H."/>
            <person name="Goodman H.M."/>
            <person name="Somerville C.R."/>
            <person name="Copenhaver G.P."/>
            <person name="Preuss D."/>
            <person name="Nierman W.C."/>
            <person name="White O."/>
            <person name="Eisen J.A."/>
            <person name="Salzberg S.L."/>
            <person name="Fraser C.M."/>
            <person name="Venter J.C."/>
        </authorList>
    </citation>
    <scope>NUCLEOTIDE SEQUENCE [LARGE SCALE GENOMIC DNA]</scope>
    <source>
        <strain>cv. Columbia</strain>
    </source>
</reference>
<reference key="2">
    <citation type="journal article" date="2017" name="Plant J.">
        <title>Araport11: a complete reannotation of the Arabidopsis thaliana reference genome.</title>
        <authorList>
            <person name="Cheng C.Y."/>
            <person name="Krishnakumar V."/>
            <person name="Chan A.P."/>
            <person name="Thibaud-Nissen F."/>
            <person name="Schobel S."/>
            <person name="Town C.D."/>
        </authorList>
    </citation>
    <scope>GENOME REANNOTATION</scope>
    <source>
        <strain>cv. Columbia</strain>
    </source>
</reference>
<reference key="3">
    <citation type="journal article" date="2003" name="Science">
        <title>Empirical analysis of transcriptional activity in the Arabidopsis genome.</title>
        <authorList>
            <person name="Yamada K."/>
            <person name="Lim J."/>
            <person name="Dale J.M."/>
            <person name="Chen H."/>
            <person name="Shinn P."/>
            <person name="Palm C.J."/>
            <person name="Southwick A.M."/>
            <person name="Wu H.C."/>
            <person name="Kim C.J."/>
            <person name="Nguyen M."/>
            <person name="Pham P.K."/>
            <person name="Cheuk R.F."/>
            <person name="Karlin-Newmann G."/>
            <person name="Liu S.X."/>
            <person name="Lam B."/>
            <person name="Sakano H."/>
            <person name="Wu T."/>
            <person name="Yu G."/>
            <person name="Miranda M."/>
            <person name="Quach H.L."/>
            <person name="Tripp M."/>
            <person name="Chang C.H."/>
            <person name="Lee J.M."/>
            <person name="Toriumi M.J."/>
            <person name="Chan M.M."/>
            <person name="Tang C.C."/>
            <person name="Onodera C.S."/>
            <person name="Deng J.M."/>
            <person name="Akiyama K."/>
            <person name="Ansari Y."/>
            <person name="Arakawa T."/>
            <person name="Banh J."/>
            <person name="Banno F."/>
            <person name="Bowser L."/>
            <person name="Brooks S.Y."/>
            <person name="Carninci P."/>
            <person name="Chao Q."/>
            <person name="Choy N."/>
            <person name="Enju A."/>
            <person name="Goldsmith A.D."/>
            <person name="Gurjal M."/>
            <person name="Hansen N.F."/>
            <person name="Hayashizaki Y."/>
            <person name="Johnson-Hopson C."/>
            <person name="Hsuan V.W."/>
            <person name="Iida K."/>
            <person name="Karnes M."/>
            <person name="Khan S."/>
            <person name="Koesema E."/>
            <person name="Ishida J."/>
            <person name="Jiang P.X."/>
            <person name="Jones T."/>
            <person name="Kawai J."/>
            <person name="Kamiya A."/>
            <person name="Meyers C."/>
            <person name="Nakajima M."/>
            <person name="Narusaka M."/>
            <person name="Seki M."/>
            <person name="Sakurai T."/>
            <person name="Satou M."/>
            <person name="Tamse R."/>
            <person name="Vaysberg M."/>
            <person name="Wallender E.K."/>
            <person name="Wong C."/>
            <person name="Yamamura Y."/>
            <person name="Yuan S."/>
            <person name="Shinozaki K."/>
            <person name="Davis R.W."/>
            <person name="Theologis A."/>
            <person name="Ecker J.R."/>
        </authorList>
    </citation>
    <scope>NUCLEOTIDE SEQUENCE [LARGE SCALE MRNA]</scope>
    <source>
        <strain>cv. Columbia</strain>
    </source>
</reference>
<reference key="4">
    <citation type="journal article" date="2001" name="J. Biol. Chem.">
        <title>The Arabidopsis thaliana ABC protein superfamily, a complete inventory.</title>
        <authorList>
            <person name="Sanchez-Fernandez R."/>
            <person name="Davies T.G."/>
            <person name="Coleman J.O."/>
            <person name="Rea P.A."/>
        </authorList>
    </citation>
    <scope>GENE FAMILY</scope>
    <scope>NOMENCLATURE</scope>
</reference>
<reference key="5">
    <citation type="journal article" date="2008" name="Trends Plant Sci.">
        <title>Plant ABC proteins - a unified nomenclature and updated inventory.</title>
        <authorList>
            <person name="Verrier P.J."/>
            <person name="Bird D."/>
            <person name="Burla B."/>
            <person name="Dassa E."/>
            <person name="Forestier C."/>
            <person name="Geisler M."/>
            <person name="Klein M."/>
            <person name="Kolukisaoglu H.U."/>
            <person name="Lee Y."/>
            <person name="Martinoia E."/>
            <person name="Murphy A."/>
            <person name="Rea P.A."/>
            <person name="Samuels L."/>
            <person name="Schulz B."/>
            <person name="Spalding E.J."/>
            <person name="Yazaki K."/>
            <person name="Theodoulou F.L."/>
        </authorList>
    </citation>
    <scope>GENE FAMILY</scope>
    <scope>NOMENCLATURE</scope>
</reference>
<reference key="6">
    <citation type="journal article" date="2009" name="Plant Physiol.">
        <title>Large-scale Arabidopsis phosphoproteome profiling reveals novel chloroplast kinase substrates and phosphorylation networks.</title>
        <authorList>
            <person name="Reiland S."/>
            <person name="Messerli G."/>
            <person name="Baerenfaller K."/>
            <person name="Gerrits B."/>
            <person name="Endler A."/>
            <person name="Grossmann J."/>
            <person name="Gruissem W."/>
            <person name="Baginsky S."/>
        </authorList>
    </citation>
    <scope>IDENTIFICATION BY MASS SPECTROMETRY [LARGE SCALE ANALYSIS]</scope>
</reference>
<reference key="7">
    <citation type="journal article" date="2022" name="Front. Plant Sci.">
        <title>Loss of multiple ABCB auxin transporters recapitulates the major twisted dwarf 1 phenotypes in Arabidopsis thaliana.</title>
        <authorList>
            <person name="Jenness M.K."/>
            <person name="Tayengwa R."/>
            <person name="Bate G.A."/>
            <person name="Tapken W."/>
            <person name="Zhang Y."/>
            <person name="Pang C."/>
            <person name="Murphy A.S."/>
        </authorList>
    </citation>
    <scope>FUNCTION</scope>
    <scope>DISRUPTION PHENOTYPE</scope>
    <scope>TISSUE SPECIFICITY</scope>
    <scope>TRANSPORTER ACTIVITY</scope>
    <source>
        <strain>cv. Columbia</strain>
    </source>
</reference>
<accession>Q8LPT1</accession>
<accession>O80635</accession>
<gene>
    <name evidence="7" type="primary">ABCB6</name>
    <name evidence="6" type="synonym">MDR6</name>
    <name type="synonym">PGP6</name>
    <name evidence="10" type="ordered locus">At2g39480</name>
    <name evidence="11" type="ORF">F12L6.14</name>
</gene>